<gene>
    <name evidence="2" type="primary">pyrR</name>
    <name type="ordered locus">SSP1574</name>
</gene>
<feature type="chain" id="PRO_0000183062" description="Bifunctional protein PyrR">
    <location>
        <begin position="1"/>
        <end position="175"/>
    </location>
</feature>
<feature type="short sequence motif" description="PRPP-binding" evidence="2">
    <location>
        <begin position="98"/>
        <end position="110"/>
    </location>
</feature>
<feature type="binding site" evidence="1">
    <location>
        <begin position="40"/>
        <end position="41"/>
    </location>
    <ligand>
        <name>substrate</name>
    </ligand>
</feature>
<feature type="binding site" evidence="1">
    <location>
        <position position="85"/>
    </location>
    <ligand>
        <name>substrate</name>
    </ligand>
</feature>
<feature type="binding site" evidence="1">
    <location>
        <begin position="102"/>
        <end position="110"/>
    </location>
    <ligand>
        <name>substrate</name>
    </ligand>
</feature>
<feature type="binding site" evidence="1">
    <location>
        <position position="135"/>
    </location>
    <ligand>
        <name>substrate</name>
    </ligand>
</feature>
<feature type="binding site" evidence="1">
    <location>
        <position position="159"/>
    </location>
    <ligand>
        <name>substrate</name>
    </ligand>
</feature>
<keyword id="KW-0328">Glycosyltransferase</keyword>
<keyword id="KW-1185">Reference proteome</keyword>
<keyword id="KW-0694">RNA-binding</keyword>
<keyword id="KW-0804">Transcription</keyword>
<keyword id="KW-0805">Transcription regulation</keyword>
<keyword id="KW-0806">Transcription termination</keyword>
<keyword id="KW-0808">Transferase</keyword>
<organism>
    <name type="scientific">Staphylococcus saprophyticus subsp. saprophyticus (strain ATCC 15305 / DSM 20229 / NCIMB 8711 / NCTC 7292 / S-41)</name>
    <dbReference type="NCBI Taxonomy" id="342451"/>
    <lineage>
        <taxon>Bacteria</taxon>
        <taxon>Bacillati</taxon>
        <taxon>Bacillota</taxon>
        <taxon>Bacilli</taxon>
        <taxon>Bacillales</taxon>
        <taxon>Staphylococcaceae</taxon>
        <taxon>Staphylococcus</taxon>
    </lineage>
</organism>
<dbReference type="EC" id="2.4.2.9" evidence="2"/>
<dbReference type="EMBL" id="AP008934">
    <property type="protein sequence ID" value="BAE18719.1"/>
    <property type="molecule type" value="Genomic_DNA"/>
</dbReference>
<dbReference type="RefSeq" id="WP_011303315.1">
    <property type="nucleotide sequence ID" value="NZ_MTGA01000034.1"/>
</dbReference>
<dbReference type="SMR" id="Q49WX9"/>
<dbReference type="GeneID" id="3615318"/>
<dbReference type="KEGG" id="ssp:SSP1574"/>
<dbReference type="PATRIC" id="fig|342451.11.peg.1576"/>
<dbReference type="eggNOG" id="COG2065">
    <property type="taxonomic scope" value="Bacteria"/>
</dbReference>
<dbReference type="HOGENOM" id="CLU_094234_2_1_9"/>
<dbReference type="OrthoDB" id="9802227at2"/>
<dbReference type="Proteomes" id="UP000006371">
    <property type="component" value="Chromosome"/>
</dbReference>
<dbReference type="GO" id="GO:0003723">
    <property type="term" value="F:RNA binding"/>
    <property type="evidence" value="ECO:0007669"/>
    <property type="project" value="UniProtKB-UniRule"/>
</dbReference>
<dbReference type="GO" id="GO:0004845">
    <property type="term" value="F:uracil phosphoribosyltransferase activity"/>
    <property type="evidence" value="ECO:0007669"/>
    <property type="project" value="UniProtKB-UniRule"/>
</dbReference>
<dbReference type="GO" id="GO:0006353">
    <property type="term" value="P:DNA-templated transcription termination"/>
    <property type="evidence" value="ECO:0007669"/>
    <property type="project" value="UniProtKB-UniRule"/>
</dbReference>
<dbReference type="CDD" id="cd06223">
    <property type="entry name" value="PRTases_typeI"/>
    <property type="match status" value="1"/>
</dbReference>
<dbReference type="FunFam" id="3.40.50.2020:FF:000020">
    <property type="entry name" value="Bifunctional protein PyrR"/>
    <property type="match status" value="1"/>
</dbReference>
<dbReference type="Gene3D" id="3.40.50.2020">
    <property type="match status" value="1"/>
</dbReference>
<dbReference type="HAMAP" id="MF_01219">
    <property type="entry name" value="PyrR"/>
    <property type="match status" value="1"/>
</dbReference>
<dbReference type="InterPro" id="IPR000836">
    <property type="entry name" value="PRibTrfase_dom"/>
</dbReference>
<dbReference type="InterPro" id="IPR029057">
    <property type="entry name" value="PRTase-like"/>
</dbReference>
<dbReference type="InterPro" id="IPR023050">
    <property type="entry name" value="PyrR"/>
</dbReference>
<dbReference type="InterPro" id="IPR050137">
    <property type="entry name" value="PyrR_bifunctional"/>
</dbReference>
<dbReference type="NCBIfam" id="NF003546">
    <property type="entry name" value="PRK05205.1-2"/>
    <property type="match status" value="1"/>
</dbReference>
<dbReference type="NCBIfam" id="NF003548">
    <property type="entry name" value="PRK05205.1-4"/>
    <property type="match status" value="1"/>
</dbReference>
<dbReference type="NCBIfam" id="NF003549">
    <property type="entry name" value="PRK05205.1-5"/>
    <property type="match status" value="1"/>
</dbReference>
<dbReference type="PANTHER" id="PTHR11608">
    <property type="entry name" value="BIFUNCTIONAL PROTEIN PYRR"/>
    <property type="match status" value="1"/>
</dbReference>
<dbReference type="PANTHER" id="PTHR11608:SF0">
    <property type="entry name" value="BIFUNCTIONAL PROTEIN PYRR"/>
    <property type="match status" value="1"/>
</dbReference>
<dbReference type="Pfam" id="PF00156">
    <property type="entry name" value="Pribosyltran"/>
    <property type="match status" value="1"/>
</dbReference>
<dbReference type="SUPFAM" id="SSF53271">
    <property type="entry name" value="PRTase-like"/>
    <property type="match status" value="1"/>
</dbReference>
<reference key="1">
    <citation type="journal article" date="2005" name="Proc. Natl. Acad. Sci. U.S.A.">
        <title>Whole genome sequence of Staphylococcus saprophyticus reveals the pathogenesis of uncomplicated urinary tract infection.</title>
        <authorList>
            <person name="Kuroda M."/>
            <person name="Yamashita A."/>
            <person name="Hirakawa H."/>
            <person name="Kumano M."/>
            <person name="Morikawa K."/>
            <person name="Higashide M."/>
            <person name="Maruyama A."/>
            <person name="Inose Y."/>
            <person name="Matoba K."/>
            <person name="Toh H."/>
            <person name="Kuhara S."/>
            <person name="Hattori M."/>
            <person name="Ohta T."/>
        </authorList>
    </citation>
    <scope>NUCLEOTIDE SEQUENCE [LARGE SCALE GENOMIC DNA]</scope>
    <source>
        <strain>ATCC 15305 / DSM 20229 / NCIMB 8711 / NCTC 7292 / S-41</strain>
    </source>
</reference>
<evidence type="ECO:0000250" key="1"/>
<evidence type="ECO:0000255" key="2">
    <source>
        <dbReference type="HAMAP-Rule" id="MF_01219"/>
    </source>
</evidence>
<protein>
    <recommendedName>
        <fullName evidence="2">Bifunctional protein PyrR</fullName>
    </recommendedName>
    <domain>
        <recommendedName>
            <fullName evidence="2">Pyrimidine operon regulatory protein</fullName>
        </recommendedName>
    </domain>
    <domain>
        <recommendedName>
            <fullName evidence="2">Uracil phosphoribosyltransferase</fullName>
            <shortName evidence="2">UPRTase</shortName>
            <ecNumber evidence="2">2.4.2.9</ecNumber>
        </recommendedName>
    </domain>
</protein>
<name>PYRR_STAS1</name>
<comment type="function">
    <text evidence="2">Regulates transcriptional attenuation of the pyrimidine nucleotide (pyr) operon by binding in a uridine-dependent manner to specific sites on pyr mRNA. This disrupts an antiterminator hairpin in the RNA and favors formation of a downstream transcription terminator, leading to a reduced expression of downstream genes.</text>
</comment>
<comment type="function">
    <text evidence="2">Also displays a weak uracil phosphoribosyltransferase activity which is not physiologically significant.</text>
</comment>
<comment type="catalytic activity">
    <reaction evidence="2">
        <text>UMP + diphosphate = 5-phospho-alpha-D-ribose 1-diphosphate + uracil</text>
        <dbReference type="Rhea" id="RHEA:13017"/>
        <dbReference type="ChEBI" id="CHEBI:17568"/>
        <dbReference type="ChEBI" id="CHEBI:33019"/>
        <dbReference type="ChEBI" id="CHEBI:57865"/>
        <dbReference type="ChEBI" id="CHEBI:58017"/>
        <dbReference type="EC" id="2.4.2.9"/>
    </reaction>
</comment>
<comment type="subunit">
    <text evidence="2">Homodimer and homohexamer; in equilibrium.</text>
</comment>
<comment type="similarity">
    <text evidence="2">Belongs to the purine/pyrimidine phosphoribosyltransferase family. PyrR subfamily.</text>
</comment>
<sequence length="175" mass="19902">MSERIIMDEAAIQRTVTRIAHEILEYNKGTDNLILLGIKTRGAFLARRIQQKIEQIDEIAVPTGTIDITQFRDDLEQTINQVDERSYEIDVNITNQVVIIIDDVLYTGRTVRASLDAVLQYARPKKIGLATLVDRGHRELPIRADFVGKNIPTAKEEDVSVYLEEIDERNAVVIE</sequence>
<proteinExistence type="inferred from homology"/>
<accession>Q49WX9</accession>